<keyword id="KW-0067">ATP-binding</keyword>
<keyword id="KW-0963">Cytoplasm</keyword>
<keyword id="KW-0227">DNA damage</keyword>
<keyword id="KW-0233">DNA recombination</keyword>
<keyword id="KW-0234">DNA repair</keyword>
<keyword id="KW-0238">DNA-binding</keyword>
<keyword id="KW-0378">Hydrolase</keyword>
<keyword id="KW-0547">Nucleotide-binding</keyword>
<comment type="function">
    <text evidence="1">The RuvA-RuvB-RuvC complex processes Holliday junction (HJ) DNA during genetic recombination and DNA repair, while the RuvA-RuvB complex plays an important role in the rescue of blocked DNA replication forks via replication fork reversal (RFR). RuvA specifically binds to HJ cruciform DNA, conferring on it an open structure. The RuvB hexamer acts as an ATP-dependent pump, pulling dsDNA into and through the RuvAB complex. RuvB forms 2 homohexamers on either side of HJ DNA bound by 1 or 2 RuvA tetramers; 4 subunits per hexamer contact DNA at a time. Coordinated motions by a converter formed by DNA-disengaged RuvB subunits stimulates ATP hydrolysis and nucleotide exchange. Immobilization of the converter enables RuvB to convert the ATP-contained energy into a lever motion, pulling 2 nucleotides of DNA out of the RuvA tetramer per ATP hydrolyzed, thus driving DNA branch migration. The RuvB motors rotate together with the DNA substrate, which together with the progressing nucleotide cycle form the mechanistic basis for DNA recombination by continuous HJ branch migration. Branch migration allows RuvC to scan DNA until it finds its consensus sequence, where it cleaves and resolves cruciform DNA.</text>
</comment>
<comment type="catalytic activity">
    <reaction evidence="1">
        <text>ATP + H2O = ADP + phosphate + H(+)</text>
        <dbReference type="Rhea" id="RHEA:13065"/>
        <dbReference type="ChEBI" id="CHEBI:15377"/>
        <dbReference type="ChEBI" id="CHEBI:15378"/>
        <dbReference type="ChEBI" id="CHEBI:30616"/>
        <dbReference type="ChEBI" id="CHEBI:43474"/>
        <dbReference type="ChEBI" id="CHEBI:456216"/>
    </reaction>
</comment>
<comment type="subunit">
    <text evidence="1">Homohexamer. Forms an RuvA(8)-RuvB(12)-Holliday junction (HJ) complex. HJ DNA is sandwiched between 2 RuvA tetramers; dsDNA enters through RuvA and exits via RuvB. An RuvB hexamer assembles on each DNA strand where it exits the tetramer. Each RuvB hexamer is contacted by two RuvA subunits (via domain III) on 2 adjacent RuvB subunits; this complex drives branch migration. In the full resolvosome a probable DNA-RuvA(4)-RuvB(12)-RuvC(2) complex forms which resolves the HJ.</text>
</comment>
<comment type="subcellular location">
    <subcellularLocation>
        <location evidence="1">Cytoplasm</location>
    </subcellularLocation>
</comment>
<comment type="domain">
    <text evidence="1">Has 3 domains, the large (RuvB-L) and small ATPase (RuvB-S) domains and the C-terminal head (RuvB-H) domain. The head domain binds DNA, while the ATPase domains jointly bind ATP, ADP or are empty depending on the state of the subunit in the translocation cycle. During a single DNA translocation step the structure of each domain remains the same, but their relative positions change.</text>
</comment>
<comment type="similarity">
    <text evidence="1">Belongs to the RuvB family.</text>
</comment>
<evidence type="ECO:0000255" key="1">
    <source>
        <dbReference type="HAMAP-Rule" id="MF_00016"/>
    </source>
</evidence>
<dbReference type="EC" id="3.6.4.-" evidence="1"/>
<dbReference type="EMBL" id="CP000094">
    <property type="protein sequence ID" value="ABA76144.1"/>
    <property type="molecule type" value="Genomic_DNA"/>
</dbReference>
<dbReference type="RefSeq" id="WP_011335643.1">
    <property type="nucleotide sequence ID" value="NC_007492.2"/>
</dbReference>
<dbReference type="SMR" id="Q3K7W0"/>
<dbReference type="KEGG" id="pfo:Pfl01_4407"/>
<dbReference type="eggNOG" id="COG2255">
    <property type="taxonomic scope" value="Bacteria"/>
</dbReference>
<dbReference type="HOGENOM" id="CLU_055599_1_0_6"/>
<dbReference type="Proteomes" id="UP000002704">
    <property type="component" value="Chromosome"/>
</dbReference>
<dbReference type="GO" id="GO:0005737">
    <property type="term" value="C:cytoplasm"/>
    <property type="evidence" value="ECO:0007669"/>
    <property type="project" value="UniProtKB-SubCell"/>
</dbReference>
<dbReference type="GO" id="GO:0048476">
    <property type="term" value="C:Holliday junction resolvase complex"/>
    <property type="evidence" value="ECO:0007669"/>
    <property type="project" value="UniProtKB-UniRule"/>
</dbReference>
<dbReference type="GO" id="GO:0005524">
    <property type="term" value="F:ATP binding"/>
    <property type="evidence" value="ECO:0007669"/>
    <property type="project" value="UniProtKB-UniRule"/>
</dbReference>
<dbReference type="GO" id="GO:0016887">
    <property type="term" value="F:ATP hydrolysis activity"/>
    <property type="evidence" value="ECO:0007669"/>
    <property type="project" value="InterPro"/>
</dbReference>
<dbReference type="GO" id="GO:0000400">
    <property type="term" value="F:four-way junction DNA binding"/>
    <property type="evidence" value="ECO:0007669"/>
    <property type="project" value="UniProtKB-UniRule"/>
</dbReference>
<dbReference type="GO" id="GO:0009378">
    <property type="term" value="F:four-way junction helicase activity"/>
    <property type="evidence" value="ECO:0007669"/>
    <property type="project" value="InterPro"/>
</dbReference>
<dbReference type="GO" id="GO:0006310">
    <property type="term" value="P:DNA recombination"/>
    <property type="evidence" value="ECO:0007669"/>
    <property type="project" value="UniProtKB-UniRule"/>
</dbReference>
<dbReference type="GO" id="GO:0006281">
    <property type="term" value="P:DNA repair"/>
    <property type="evidence" value="ECO:0007669"/>
    <property type="project" value="UniProtKB-UniRule"/>
</dbReference>
<dbReference type="CDD" id="cd00009">
    <property type="entry name" value="AAA"/>
    <property type="match status" value="1"/>
</dbReference>
<dbReference type="FunFam" id="1.10.10.10:FF:000086">
    <property type="entry name" value="Holliday junction ATP-dependent DNA helicase RuvB"/>
    <property type="match status" value="1"/>
</dbReference>
<dbReference type="FunFam" id="1.10.8.60:FF:000023">
    <property type="entry name" value="Holliday junction ATP-dependent DNA helicase RuvB"/>
    <property type="match status" value="1"/>
</dbReference>
<dbReference type="FunFam" id="3.40.50.300:FF:000073">
    <property type="entry name" value="Holliday junction ATP-dependent DNA helicase RuvB"/>
    <property type="match status" value="1"/>
</dbReference>
<dbReference type="Gene3D" id="1.10.8.60">
    <property type="match status" value="1"/>
</dbReference>
<dbReference type="Gene3D" id="3.40.50.300">
    <property type="entry name" value="P-loop containing nucleotide triphosphate hydrolases"/>
    <property type="match status" value="1"/>
</dbReference>
<dbReference type="Gene3D" id="1.10.10.10">
    <property type="entry name" value="Winged helix-like DNA-binding domain superfamily/Winged helix DNA-binding domain"/>
    <property type="match status" value="1"/>
</dbReference>
<dbReference type="HAMAP" id="MF_00016">
    <property type="entry name" value="DNA_HJ_migration_RuvB"/>
    <property type="match status" value="1"/>
</dbReference>
<dbReference type="InterPro" id="IPR003593">
    <property type="entry name" value="AAA+_ATPase"/>
</dbReference>
<dbReference type="InterPro" id="IPR041445">
    <property type="entry name" value="AAA_lid_4"/>
</dbReference>
<dbReference type="InterPro" id="IPR004605">
    <property type="entry name" value="DNA_helicase_Holl-junc_RuvB"/>
</dbReference>
<dbReference type="InterPro" id="IPR027417">
    <property type="entry name" value="P-loop_NTPase"/>
</dbReference>
<dbReference type="InterPro" id="IPR008824">
    <property type="entry name" value="RuvB-like_N"/>
</dbReference>
<dbReference type="InterPro" id="IPR008823">
    <property type="entry name" value="RuvB_C"/>
</dbReference>
<dbReference type="InterPro" id="IPR036388">
    <property type="entry name" value="WH-like_DNA-bd_sf"/>
</dbReference>
<dbReference type="InterPro" id="IPR036390">
    <property type="entry name" value="WH_DNA-bd_sf"/>
</dbReference>
<dbReference type="NCBIfam" id="NF000868">
    <property type="entry name" value="PRK00080.1"/>
    <property type="match status" value="1"/>
</dbReference>
<dbReference type="NCBIfam" id="TIGR00635">
    <property type="entry name" value="ruvB"/>
    <property type="match status" value="1"/>
</dbReference>
<dbReference type="PANTHER" id="PTHR42848">
    <property type="match status" value="1"/>
</dbReference>
<dbReference type="PANTHER" id="PTHR42848:SF1">
    <property type="entry name" value="HOLLIDAY JUNCTION BRANCH MIGRATION COMPLEX SUBUNIT RUVB"/>
    <property type="match status" value="1"/>
</dbReference>
<dbReference type="Pfam" id="PF17864">
    <property type="entry name" value="AAA_lid_4"/>
    <property type="match status" value="1"/>
</dbReference>
<dbReference type="Pfam" id="PF05491">
    <property type="entry name" value="RuvB_C"/>
    <property type="match status" value="1"/>
</dbReference>
<dbReference type="Pfam" id="PF05496">
    <property type="entry name" value="RuvB_N"/>
    <property type="match status" value="1"/>
</dbReference>
<dbReference type="SMART" id="SM00382">
    <property type="entry name" value="AAA"/>
    <property type="match status" value="1"/>
</dbReference>
<dbReference type="SUPFAM" id="SSF52540">
    <property type="entry name" value="P-loop containing nucleoside triphosphate hydrolases"/>
    <property type="match status" value="1"/>
</dbReference>
<dbReference type="SUPFAM" id="SSF46785">
    <property type="entry name" value="Winged helix' DNA-binding domain"/>
    <property type="match status" value="1"/>
</dbReference>
<name>RUVB_PSEPF</name>
<proteinExistence type="inferred from homology"/>
<accession>Q3K7W0</accession>
<protein>
    <recommendedName>
        <fullName evidence="1">Holliday junction branch migration complex subunit RuvB</fullName>
        <ecNumber evidence="1">3.6.4.-</ecNumber>
    </recommendedName>
</protein>
<feature type="chain" id="PRO_0000235392" description="Holliday junction branch migration complex subunit RuvB">
    <location>
        <begin position="1"/>
        <end position="353"/>
    </location>
</feature>
<feature type="region of interest" description="Large ATPase domain (RuvB-L)" evidence="1">
    <location>
        <begin position="4"/>
        <end position="186"/>
    </location>
</feature>
<feature type="region of interest" description="Small ATPAse domain (RuvB-S)" evidence="1">
    <location>
        <begin position="187"/>
        <end position="257"/>
    </location>
</feature>
<feature type="region of interest" description="Head domain (RuvB-H)" evidence="1">
    <location>
        <begin position="260"/>
        <end position="353"/>
    </location>
</feature>
<feature type="binding site" evidence="1">
    <location>
        <position position="25"/>
    </location>
    <ligand>
        <name>ATP</name>
        <dbReference type="ChEBI" id="CHEBI:30616"/>
    </ligand>
</feature>
<feature type="binding site" evidence="1">
    <location>
        <position position="26"/>
    </location>
    <ligand>
        <name>ATP</name>
        <dbReference type="ChEBI" id="CHEBI:30616"/>
    </ligand>
</feature>
<feature type="binding site" evidence="1">
    <location>
        <position position="67"/>
    </location>
    <ligand>
        <name>ATP</name>
        <dbReference type="ChEBI" id="CHEBI:30616"/>
    </ligand>
</feature>
<feature type="binding site" evidence="1">
    <location>
        <position position="70"/>
    </location>
    <ligand>
        <name>ATP</name>
        <dbReference type="ChEBI" id="CHEBI:30616"/>
    </ligand>
</feature>
<feature type="binding site" evidence="1">
    <location>
        <position position="71"/>
    </location>
    <ligand>
        <name>ATP</name>
        <dbReference type="ChEBI" id="CHEBI:30616"/>
    </ligand>
</feature>
<feature type="binding site" evidence="1">
    <location>
        <position position="71"/>
    </location>
    <ligand>
        <name>Mg(2+)</name>
        <dbReference type="ChEBI" id="CHEBI:18420"/>
    </ligand>
</feature>
<feature type="binding site" evidence="1">
    <location>
        <position position="72"/>
    </location>
    <ligand>
        <name>ATP</name>
        <dbReference type="ChEBI" id="CHEBI:30616"/>
    </ligand>
</feature>
<feature type="binding site" evidence="1">
    <location>
        <begin position="133"/>
        <end position="135"/>
    </location>
    <ligand>
        <name>ATP</name>
        <dbReference type="ChEBI" id="CHEBI:30616"/>
    </ligand>
</feature>
<feature type="binding site" evidence="1">
    <location>
        <position position="176"/>
    </location>
    <ligand>
        <name>ATP</name>
        <dbReference type="ChEBI" id="CHEBI:30616"/>
    </ligand>
</feature>
<feature type="binding site" evidence="1">
    <location>
        <position position="186"/>
    </location>
    <ligand>
        <name>ATP</name>
        <dbReference type="ChEBI" id="CHEBI:30616"/>
    </ligand>
</feature>
<feature type="binding site" evidence="1">
    <location>
        <position position="223"/>
    </location>
    <ligand>
        <name>ATP</name>
        <dbReference type="ChEBI" id="CHEBI:30616"/>
    </ligand>
</feature>
<feature type="binding site" evidence="1">
    <location>
        <position position="296"/>
    </location>
    <ligand>
        <name>DNA</name>
        <dbReference type="ChEBI" id="CHEBI:16991"/>
    </ligand>
</feature>
<feature type="binding site" evidence="1">
    <location>
        <position position="315"/>
    </location>
    <ligand>
        <name>DNA</name>
        <dbReference type="ChEBI" id="CHEBI:16991"/>
    </ligand>
</feature>
<feature type="binding site" evidence="1">
    <location>
        <position position="320"/>
    </location>
    <ligand>
        <name>DNA</name>
        <dbReference type="ChEBI" id="CHEBI:16991"/>
    </ligand>
</feature>
<gene>
    <name evidence="1" type="primary">ruvB</name>
    <name type="ordered locus">Pfl01_4407</name>
</gene>
<reference key="1">
    <citation type="journal article" date="2009" name="Genome Biol.">
        <title>Genomic and genetic analyses of diversity and plant interactions of Pseudomonas fluorescens.</title>
        <authorList>
            <person name="Silby M.W."/>
            <person name="Cerdeno-Tarraga A.M."/>
            <person name="Vernikos G.S."/>
            <person name="Giddens S.R."/>
            <person name="Jackson R.W."/>
            <person name="Preston G.M."/>
            <person name="Zhang X.-X."/>
            <person name="Moon C.D."/>
            <person name="Gehrig S.M."/>
            <person name="Godfrey S.A.C."/>
            <person name="Knight C.G."/>
            <person name="Malone J.G."/>
            <person name="Robinson Z."/>
            <person name="Spiers A.J."/>
            <person name="Harris S."/>
            <person name="Challis G.L."/>
            <person name="Yaxley A.M."/>
            <person name="Harris D."/>
            <person name="Seeger K."/>
            <person name="Murphy L."/>
            <person name="Rutter S."/>
            <person name="Squares R."/>
            <person name="Quail M.A."/>
            <person name="Saunders E."/>
            <person name="Mavromatis K."/>
            <person name="Brettin T.S."/>
            <person name="Bentley S.D."/>
            <person name="Hothersall J."/>
            <person name="Stephens E."/>
            <person name="Thomas C.M."/>
            <person name="Parkhill J."/>
            <person name="Levy S.B."/>
            <person name="Rainey P.B."/>
            <person name="Thomson N.R."/>
        </authorList>
    </citation>
    <scope>NUCLEOTIDE SEQUENCE [LARGE SCALE GENOMIC DNA]</scope>
    <source>
        <strain>Pf0-1</strain>
    </source>
</reference>
<sequence length="353" mass="39260">MIEADRLIAATHSPREREEVQDRAIRPVSLAEYIGQPTVREQMELFIQAARGRSESLDHTLIFGPPGLGKTTLANIIAQEMGVSIKSTSGPVLERPGDLAALLTNLEPHDVLFIDEIHRLSPIVEEVLYPAMEDFQLDIMIGEGPAARSIKLDLPPFTLVGATTRAGMLTNPLRDRFGIVQRLEFYSTADLATIVSRSANILGLPLDPEGSFEIARRARGTPRIANRLLRRVRDFAEVRAKGHITKSVADLALNLLDVDEHGFDHQDRRLLLTMIEKFDGGPVGIDSLAAAISEERHTIEDVLEPYLIQQGYIMRTPRGRVVTRHAYLHFGLNIPTRMGEMPVVDEFLDAVDD</sequence>
<organism>
    <name type="scientific">Pseudomonas fluorescens (strain Pf0-1)</name>
    <dbReference type="NCBI Taxonomy" id="205922"/>
    <lineage>
        <taxon>Bacteria</taxon>
        <taxon>Pseudomonadati</taxon>
        <taxon>Pseudomonadota</taxon>
        <taxon>Gammaproteobacteria</taxon>
        <taxon>Pseudomonadales</taxon>
        <taxon>Pseudomonadaceae</taxon>
        <taxon>Pseudomonas</taxon>
    </lineage>
</organism>